<feature type="chain" id="PRO_0000353558" description="DNA-directed RNA polymerase subunit beta''">
    <location>
        <begin position="1"/>
        <end position="1339"/>
    </location>
</feature>
<feature type="binding site" evidence="1">
    <location>
        <position position="226"/>
    </location>
    <ligand>
        <name>Zn(2+)</name>
        <dbReference type="ChEBI" id="CHEBI:29105"/>
    </ligand>
</feature>
<feature type="binding site" evidence="1">
    <location>
        <position position="299"/>
    </location>
    <ligand>
        <name>Zn(2+)</name>
        <dbReference type="ChEBI" id="CHEBI:29105"/>
    </ligand>
</feature>
<feature type="binding site" evidence="1">
    <location>
        <position position="306"/>
    </location>
    <ligand>
        <name>Zn(2+)</name>
        <dbReference type="ChEBI" id="CHEBI:29105"/>
    </ligand>
</feature>
<feature type="binding site" evidence="1">
    <location>
        <position position="309"/>
    </location>
    <ligand>
        <name>Zn(2+)</name>
        <dbReference type="ChEBI" id="CHEBI:29105"/>
    </ligand>
</feature>
<proteinExistence type="inferred from homology"/>
<gene>
    <name evidence="1" type="primary">rpoC2</name>
</gene>
<comment type="function">
    <text evidence="1">DNA-dependent RNA polymerase catalyzes the transcription of DNA into RNA using the four ribonucleoside triphosphates as substrates.</text>
</comment>
<comment type="catalytic activity">
    <reaction evidence="1">
        <text>RNA(n) + a ribonucleoside 5'-triphosphate = RNA(n+1) + diphosphate</text>
        <dbReference type="Rhea" id="RHEA:21248"/>
        <dbReference type="Rhea" id="RHEA-COMP:14527"/>
        <dbReference type="Rhea" id="RHEA-COMP:17342"/>
        <dbReference type="ChEBI" id="CHEBI:33019"/>
        <dbReference type="ChEBI" id="CHEBI:61557"/>
        <dbReference type="ChEBI" id="CHEBI:140395"/>
        <dbReference type="EC" id="2.7.7.6"/>
    </reaction>
</comment>
<comment type="cofactor">
    <cofactor evidence="1">
        <name>Zn(2+)</name>
        <dbReference type="ChEBI" id="CHEBI:29105"/>
    </cofactor>
    <text evidence="1">Binds 1 Zn(2+) ion per subunit.</text>
</comment>
<comment type="subunit">
    <text evidence="1">In plastids the minimal PEP RNA polymerase catalytic core is composed of four subunits: alpha, beta, beta', and beta''. When a (nuclear-encoded) sigma factor is associated with the core the holoenzyme is formed, which can initiate transcription.</text>
</comment>
<comment type="subcellular location">
    <subcellularLocation>
        <location evidence="1">Plastid</location>
        <location evidence="1">Chloroplast</location>
    </subcellularLocation>
</comment>
<comment type="similarity">
    <text evidence="1">Belongs to the RNA polymerase beta' chain family. RpoC2 subfamily.</text>
</comment>
<keyword id="KW-0150">Chloroplast</keyword>
<keyword id="KW-0240">DNA-directed RNA polymerase</keyword>
<keyword id="KW-0479">Metal-binding</keyword>
<keyword id="KW-0548">Nucleotidyltransferase</keyword>
<keyword id="KW-0934">Plastid</keyword>
<keyword id="KW-0804">Transcription</keyword>
<keyword id="KW-0808">Transferase</keyword>
<keyword id="KW-0862">Zinc</keyword>
<name>RPOC2_CYCTA</name>
<evidence type="ECO:0000255" key="1">
    <source>
        <dbReference type="HAMAP-Rule" id="MF_01324"/>
    </source>
</evidence>
<dbReference type="EC" id="2.7.7.6" evidence="1"/>
<dbReference type="EMBL" id="AP009339">
    <property type="protein sequence ID" value="BAF64923.1"/>
    <property type="molecule type" value="Genomic_DNA"/>
</dbReference>
<dbReference type="RefSeq" id="YP_001312182.1">
    <property type="nucleotide sequence ID" value="NC_009618.1"/>
</dbReference>
<dbReference type="GeneID" id="5309622"/>
<dbReference type="GO" id="GO:0009507">
    <property type="term" value="C:chloroplast"/>
    <property type="evidence" value="ECO:0007669"/>
    <property type="project" value="UniProtKB-SubCell"/>
</dbReference>
<dbReference type="GO" id="GO:0000428">
    <property type="term" value="C:DNA-directed RNA polymerase complex"/>
    <property type="evidence" value="ECO:0007669"/>
    <property type="project" value="UniProtKB-KW"/>
</dbReference>
<dbReference type="GO" id="GO:0005739">
    <property type="term" value="C:mitochondrion"/>
    <property type="evidence" value="ECO:0007669"/>
    <property type="project" value="GOC"/>
</dbReference>
<dbReference type="GO" id="GO:0003677">
    <property type="term" value="F:DNA binding"/>
    <property type="evidence" value="ECO:0007669"/>
    <property type="project" value="UniProtKB-UniRule"/>
</dbReference>
<dbReference type="GO" id="GO:0003899">
    <property type="term" value="F:DNA-directed RNA polymerase activity"/>
    <property type="evidence" value="ECO:0007669"/>
    <property type="project" value="UniProtKB-UniRule"/>
</dbReference>
<dbReference type="GO" id="GO:0008270">
    <property type="term" value="F:zinc ion binding"/>
    <property type="evidence" value="ECO:0007669"/>
    <property type="project" value="UniProtKB-UniRule"/>
</dbReference>
<dbReference type="GO" id="GO:0006351">
    <property type="term" value="P:DNA-templated transcription"/>
    <property type="evidence" value="ECO:0007669"/>
    <property type="project" value="UniProtKB-UniRule"/>
</dbReference>
<dbReference type="CDD" id="cd02655">
    <property type="entry name" value="RNAP_beta'_C"/>
    <property type="match status" value="1"/>
</dbReference>
<dbReference type="Gene3D" id="1.10.132.30">
    <property type="match status" value="1"/>
</dbReference>
<dbReference type="Gene3D" id="1.10.150.390">
    <property type="match status" value="1"/>
</dbReference>
<dbReference type="Gene3D" id="1.10.1790.20">
    <property type="match status" value="1"/>
</dbReference>
<dbReference type="Gene3D" id="1.10.274.100">
    <property type="entry name" value="RNA polymerase Rpb1, domain 3"/>
    <property type="match status" value="1"/>
</dbReference>
<dbReference type="HAMAP" id="MF_01324">
    <property type="entry name" value="RNApol_bact_RpoC2"/>
    <property type="match status" value="1"/>
</dbReference>
<dbReference type="InterPro" id="IPR012756">
    <property type="entry name" value="DNA-dir_RpoC2_beta_pp"/>
</dbReference>
<dbReference type="InterPro" id="IPR050254">
    <property type="entry name" value="RNA_pol_beta''_euk"/>
</dbReference>
<dbReference type="InterPro" id="IPR042102">
    <property type="entry name" value="RNA_pol_Rpb1_3_sf"/>
</dbReference>
<dbReference type="InterPro" id="IPR007083">
    <property type="entry name" value="RNA_pol_Rpb1_4"/>
</dbReference>
<dbReference type="InterPro" id="IPR007081">
    <property type="entry name" value="RNA_pol_Rpb1_5"/>
</dbReference>
<dbReference type="InterPro" id="IPR038120">
    <property type="entry name" value="Rpb1_funnel_sf"/>
</dbReference>
<dbReference type="NCBIfam" id="TIGR02388">
    <property type="entry name" value="rpoC2_cyan"/>
    <property type="match status" value="1"/>
</dbReference>
<dbReference type="PANTHER" id="PTHR34995">
    <property type="entry name" value="DNA-DIRECTED RNA POLYMERASE SUBUNIT BETA"/>
    <property type="match status" value="1"/>
</dbReference>
<dbReference type="PANTHER" id="PTHR34995:SF1">
    <property type="entry name" value="DNA-DIRECTED RNA POLYMERASE SUBUNIT BETA"/>
    <property type="match status" value="1"/>
</dbReference>
<dbReference type="Pfam" id="PF05000">
    <property type="entry name" value="RNA_pol_Rpb1_4"/>
    <property type="match status" value="1"/>
</dbReference>
<dbReference type="Pfam" id="PF04998">
    <property type="entry name" value="RNA_pol_Rpb1_5"/>
    <property type="match status" value="2"/>
</dbReference>
<dbReference type="SUPFAM" id="SSF64484">
    <property type="entry name" value="beta and beta-prime subunits of DNA dependent RNA-polymerase"/>
    <property type="match status" value="1"/>
</dbReference>
<reference key="1">
    <citation type="journal article" date="2007" name="Mol. Biol. Evol.">
        <title>Chloroplast genome (cpDNA) of Cycas taitungensis and 56 cp protein-coding genes of Gnetum parvifolium: insights into cpDNA evolution and phylogeny of extant seed plants.</title>
        <authorList>
            <person name="Wu C.-S."/>
            <person name="Wang Y.-N."/>
            <person name="Liu S.-M."/>
            <person name="Chaw S.-M."/>
        </authorList>
    </citation>
    <scope>NUCLEOTIDE SEQUENCE [LARGE SCALE GENOMIC DNA]</scope>
</reference>
<accession>A6H5F7</accession>
<geneLocation type="chloroplast"/>
<organism>
    <name type="scientific">Cycas taitungensis</name>
    <name type="common">Prince sago</name>
    <name type="synonym">Cycas taiwaniana</name>
    <dbReference type="NCBI Taxonomy" id="54799"/>
    <lineage>
        <taxon>Eukaryota</taxon>
        <taxon>Viridiplantae</taxon>
        <taxon>Streptophyta</taxon>
        <taxon>Embryophyta</taxon>
        <taxon>Tracheophyta</taxon>
        <taxon>Spermatophyta</taxon>
        <taxon>Cycadidae</taxon>
        <taxon>Cycadales</taxon>
        <taxon>Cycadaceae</taxon>
        <taxon>Cycas</taxon>
    </lineage>
</organism>
<protein>
    <recommendedName>
        <fullName evidence="1">DNA-directed RNA polymerase subunit beta''</fullName>
        <ecNumber evidence="1">2.7.7.6</ecNumber>
    </recommendedName>
    <alternativeName>
        <fullName evidence="1">PEP</fullName>
    </alternativeName>
    <alternativeName>
        <fullName evidence="1">Plastid-encoded RNA polymerase subunit beta''</fullName>
        <shortName evidence="1">RNA polymerase subunit beta''</shortName>
    </alternativeName>
</protein>
<sequence>MRRFFPMAERAKLLFHNEAMDKTAMKQLISRLINHFGMTYTSNISDQLKTSGFQRATDAAISLGIDDLLTAPSKGWLVQDAEQQGSISEKHHHYGNVHAVEKLRQSIETWYATSEYLRQEMNPNFRMTDPFNPVHMMSFSGSRGSTSQVHQLVGMRGLVSDPQGQIVDLPIQSNFREGLSLTEYIISCYGARKGVVDTAVRTSDAGYLTRRLVEVVQHIVVRKTDCGTIQGIFVNLIQGRERIKNRIVLQTLIGRVLADDVYIDMRCIATRNQDIGVGLAHQLITLRAQPIYIRTPSTCKSLSRICRLCYGRSPTHGNLIELGEAVGIIAGQSIGEPGTQLTLRTFHTGGIFTGDIAEHVRAPFNGKIEFDENLVYPTRTRHGHPAFMCHNNLSITLDGQDQVHDLTISPQSLLLVQNNQYVESEQIIAEVHARTSPSKEKVRKHIYSNLEGEMHWSTNVCHAPEYVQGNVHLILRTSHLWVLSGGIHGSSAVSFPFHKDQDQVNVQLPLAKHELLPDYSVNQDRMKHKSVDSNFYGKEEQISSYSEIDRVISNEHWDSIYSTISSDNFNISGKKQRNRFFVPLRYDKERGNKGISRPNLIIKISRNGISQRNDIFAVLDDPRYRINSSGIIKYGTIKVDSIGNKENYLGDQRARGFRSKDKMKGGRFLFIPEEVHILYESSSIMVQNNSIIRAGTQITCDIESQVGGLVRIVRIKKKIEMRILPGDIYFPGEIHGISRHNGTLIPPGKILFDEFQSENWIYLQWIIPPKEKPFVPVRPVVEYGIPDGPDITAPLSLDLLREGDNLQVRVGNFLLYGDGERIQVINDISIQLVRTYLVLDWEQKDSMEEAYAYLTEVRTNGIVRNXLQISLAKYPILYMGKRKNTAGSKSMFHNKLDHANPISSNEESQLLSQHQGTIRALPNEREEGGSLMVLSPSDCSRIVLSKGSKHYDMVNRSIQDDSMMQIIELSGFLGNLHSIANRSPSSHSITYNKYYNISLKEQPIFGNSENTLRVPKWYFMDENTVVSNFGPCRNIISDLFNSNRCFPLSKFCENPFPVVSLGQLIRESVRISEDEPLPGSGQIIAVHEESLVIRLAELYLATRRATVHGHYGEIINEGDTLITLIYERFKSGDIIQGLPKVEQLSEARSINSISMNLEKSFEDWNRDMTRSLGSPWGSFISSKITMEQSRIHLVNQIQRVYRSQGVQISDKHIEIIVRQMTSKVLISGDGMADVFLPGELIELSRAQRMDRALKEATYYRTMLLGATRASLDTQSFISEAGFQETARVLARAALQGRIDWLKGLKENVILGGIVPAGTGFKQSIYHSGERNEIDPRTGK</sequence>